<comment type="function">
    <text evidence="1">Sulfur carrier protein which probably makes part of a sulfur-relay system.</text>
</comment>
<comment type="subcellular location">
    <subcellularLocation>
        <location evidence="1">Cytoplasm</location>
    </subcellularLocation>
</comment>
<comment type="similarity">
    <text evidence="1">Belongs to the sulfur carrier protein TusA family.</text>
</comment>
<proteinExistence type="inferred from homology"/>
<name>TUSA_SHESW</name>
<feature type="chain" id="PRO_1000050031" description="Sulfur carrier protein TusA">
    <location>
        <begin position="1"/>
        <end position="81"/>
    </location>
</feature>
<feature type="active site" description="Cysteine persulfide intermediate" evidence="1">
    <location>
        <position position="19"/>
    </location>
</feature>
<protein>
    <recommendedName>
        <fullName evidence="1">Sulfur carrier protein TusA</fullName>
    </recommendedName>
</protein>
<keyword id="KW-0963">Cytoplasm</keyword>
<reference key="1">
    <citation type="submission" date="2006-12" db="EMBL/GenBank/DDBJ databases">
        <title>Complete sequence of Shewanella sp. W3-18-1.</title>
        <authorList>
            <consortium name="US DOE Joint Genome Institute"/>
            <person name="Copeland A."/>
            <person name="Lucas S."/>
            <person name="Lapidus A."/>
            <person name="Barry K."/>
            <person name="Detter J.C."/>
            <person name="Glavina del Rio T."/>
            <person name="Hammon N."/>
            <person name="Israni S."/>
            <person name="Dalin E."/>
            <person name="Tice H."/>
            <person name="Pitluck S."/>
            <person name="Chain P."/>
            <person name="Malfatti S."/>
            <person name="Shin M."/>
            <person name="Vergez L."/>
            <person name="Schmutz J."/>
            <person name="Larimer F."/>
            <person name="Land M."/>
            <person name="Hauser L."/>
            <person name="Kyrpides N."/>
            <person name="Lykidis A."/>
            <person name="Tiedje J."/>
            <person name="Richardson P."/>
        </authorList>
    </citation>
    <scope>NUCLEOTIDE SEQUENCE [LARGE SCALE GENOMIC DNA]</scope>
    <source>
        <strain>W3-18-1</strain>
    </source>
</reference>
<evidence type="ECO:0000255" key="1">
    <source>
        <dbReference type="HAMAP-Rule" id="MF_00413"/>
    </source>
</evidence>
<sequence>MNDAFSNAQHKLDALGLRCPEPVMMVRKTVRQMAAGETLLIIADDPATTRDIPSFCEFMDHTLIASETAQTPYQYLIKKGL</sequence>
<dbReference type="EMBL" id="CP000503">
    <property type="protein sequence ID" value="ABM22864.1"/>
    <property type="molecule type" value="Genomic_DNA"/>
</dbReference>
<dbReference type="RefSeq" id="WP_011787433.1">
    <property type="nucleotide sequence ID" value="NC_008750.1"/>
</dbReference>
<dbReference type="SMR" id="A1RDW2"/>
<dbReference type="GeneID" id="67441603"/>
<dbReference type="KEGG" id="shw:Sputw3181_0011"/>
<dbReference type="HOGENOM" id="CLU_165255_5_0_6"/>
<dbReference type="Proteomes" id="UP000002597">
    <property type="component" value="Chromosome"/>
</dbReference>
<dbReference type="GO" id="GO:0005737">
    <property type="term" value="C:cytoplasm"/>
    <property type="evidence" value="ECO:0007669"/>
    <property type="project" value="UniProtKB-SubCell"/>
</dbReference>
<dbReference type="GO" id="GO:0097163">
    <property type="term" value="F:sulfur carrier activity"/>
    <property type="evidence" value="ECO:0007669"/>
    <property type="project" value="UniProtKB-UniRule"/>
</dbReference>
<dbReference type="GO" id="GO:0002143">
    <property type="term" value="P:tRNA wobble position uridine thiolation"/>
    <property type="evidence" value="ECO:0007669"/>
    <property type="project" value="InterPro"/>
</dbReference>
<dbReference type="CDD" id="cd03423">
    <property type="entry name" value="SirA"/>
    <property type="match status" value="1"/>
</dbReference>
<dbReference type="Gene3D" id="3.30.110.40">
    <property type="entry name" value="TusA-like domain"/>
    <property type="match status" value="1"/>
</dbReference>
<dbReference type="HAMAP" id="MF_00413">
    <property type="entry name" value="Thiourid_synth_A"/>
    <property type="match status" value="1"/>
</dbReference>
<dbReference type="InterPro" id="IPR022931">
    <property type="entry name" value="Sulphur_carrier_TusA"/>
</dbReference>
<dbReference type="InterPro" id="IPR001455">
    <property type="entry name" value="TusA-like"/>
</dbReference>
<dbReference type="InterPro" id="IPR036868">
    <property type="entry name" value="TusA-like_sf"/>
</dbReference>
<dbReference type="NCBIfam" id="NF001423">
    <property type="entry name" value="PRK00299.1"/>
    <property type="match status" value="1"/>
</dbReference>
<dbReference type="PANTHER" id="PTHR33279:SF2">
    <property type="entry name" value="SULFUR CARRIER PROTEIN TUSA"/>
    <property type="match status" value="1"/>
</dbReference>
<dbReference type="PANTHER" id="PTHR33279">
    <property type="entry name" value="SULFUR CARRIER PROTEIN YEDF-RELATED"/>
    <property type="match status" value="1"/>
</dbReference>
<dbReference type="Pfam" id="PF01206">
    <property type="entry name" value="TusA"/>
    <property type="match status" value="1"/>
</dbReference>
<dbReference type="SUPFAM" id="SSF64307">
    <property type="entry name" value="SirA-like"/>
    <property type="match status" value="1"/>
</dbReference>
<dbReference type="PROSITE" id="PS01148">
    <property type="entry name" value="UPF0033"/>
    <property type="match status" value="1"/>
</dbReference>
<organism>
    <name type="scientific">Shewanella sp. (strain W3-18-1)</name>
    <dbReference type="NCBI Taxonomy" id="351745"/>
    <lineage>
        <taxon>Bacteria</taxon>
        <taxon>Pseudomonadati</taxon>
        <taxon>Pseudomonadota</taxon>
        <taxon>Gammaproteobacteria</taxon>
        <taxon>Alteromonadales</taxon>
        <taxon>Shewanellaceae</taxon>
        <taxon>Shewanella</taxon>
    </lineage>
</organism>
<gene>
    <name evidence="1" type="primary">tusA</name>
    <name type="ordered locus">Sputw3181_0011</name>
</gene>
<accession>A1RDW2</accession>